<feature type="chain" id="PRO_0000123455" description="Unconventional myosin IC">
    <location>
        <begin position="1"/>
        <end position="1035"/>
    </location>
</feature>
<feature type="domain" description="Myosin motor" evidence="2">
    <location>
        <begin position="21"/>
        <end position="703"/>
    </location>
</feature>
<feature type="domain" description="IQ 1" evidence="1">
    <location>
        <begin position="696"/>
        <end position="728"/>
    </location>
</feature>
<feature type="domain" description="IQ 2" evidence="1">
    <location>
        <begin position="729"/>
        <end position="751"/>
    </location>
</feature>
<feature type="domain" description="IQ 3" evidence="1">
    <location>
        <begin position="752"/>
        <end position="779"/>
    </location>
</feature>
<feature type="domain" description="TH1" evidence="3">
    <location>
        <begin position="857"/>
        <end position="1035"/>
    </location>
</feature>
<feature type="region of interest" description="Actin-binding" evidence="2">
    <location>
        <begin position="578"/>
        <end position="600"/>
    </location>
</feature>
<feature type="binding site" evidence="2">
    <location>
        <begin position="114"/>
        <end position="121"/>
    </location>
    <ligand>
        <name>ATP</name>
        <dbReference type="ChEBI" id="CHEBI:30616"/>
    </ligand>
</feature>
<feature type="modified residue" description="Phosphoserine" evidence="5">
    <location>
        <position position="304"/>
    </location>
</feature>
<feature type="modified residue" description="Phosphothreonine" evidence="5">
    <location>
        <position position="310"/>
    </location>
</feature>
<feature type="splice variant" id="VSP_009274" description="In isoform B." evidence="15">
    <location>
        <begin position="1"/>
        <end position="9"/>
    </location>
</feature>
<feature type="splice variant" id="VSP_035432" description="In isoform D." evidence="16">
    <original>AS</original>
    <variation>YIEIKSLIFAIMDTKDYID</variation>
    <location>
        <begin position="2"/>
        <end position="3"/>
    </location>
</feature>
<feature type="mutagenesis site" description="Abolishes the ability to cause laterality defects upon overexpression." evidence="7">
    <location>
        <begin position="114"/>
        <end position="121"/>
    </location>
</feature>
<feature type="mutagenesis site" description="Abolishes the ability to cause laterality defects upon overexpression; when associated with A-166 and A-395." evidence="7">
    <original>K</original>
    <variation>A</variation>
    <location>
        <position position="120"/>
    </location>
</feature>
<feature type="mutagenesis site" description="Abolishes the ability to cause laterality defects upon overexpression; when associated with A-120 and A-395." evidence="7">
    <original>N</original>
    <variation>A</variation>
    <location>
        <position position="166"/>
    </location>
</feature>
<feature type="mutagenesis site" description="Abolishes the ability to cause laterality defects upon overexpression; when associated with A-120 and A-166." evidence="7">
    <original>F</original>
    <variation>A</variation>
    <location>
        <position position="395"/>
    </location>
</feature>
<feature type="mutagenesis site" description="Abolishes the ability to cause laterality defects upon overexpression." evidence="7">
    <location>
        <begin position="590"/>
        <end position="600"/>
    </location>
</feature>
<feature type="mutagenesis site" description="No effect on the ability to cause laterality defects upon overexpression." evidence="7">
    <location>
        <begin position="705"/>
        <end position="774"/>
    </location>
</feature>
<feature type="mutagenesis site" description="Abolishes the ability to cause laterality defects upon overexpression." evidence="7">
    <location>
        <begin position="775"/>
        <end position="1035"/>
    </location>
</feature>
<feature type="sequence conflict" description="In Ref. 1; AAA19591." evidence="16" ref="1">
    <original>D</original>
    <variation>N</variation>
    <location>
        <position position="73"/>
    </location>
</feature>
<feature type="sequence conflict" description="In Ref. 1; AAA19591." evidence="16" ref="1">
    <original>R</original>
    <variation>G</variation>
    <location>
        <position position="230"/>
    </location>
</feature>
<feature type="sequence conflict" description="In Ref. 1; AAA19591." evidence="16" ref="1">
    <original>R</original>
    <variation>S</variation>
    <location>
        <position position="251"/>
    </location>
</feature>
<feature type="sequence conflict" description="In Ref. 1; AAA19591." evidence="16" ref="1">
    <original>T</original>
    <variation>G</variation>
    <location>
        <position position="271"/>
    </location>
</feature>
<feature type="sequence conflict" description="In Ref. 1; AAA19591 and 5; L13070." evidence="16" ref="1 5">
    <original>N</original>
    <variation>S</variation>
    <location>
        <position position="554"/>
    </location>
</feature>
<feature type="sequence conflict" description="In Ref. 5; L13070." evidence="16" ref="5">
    <original>EL</original>
    <variation>DV</variation>
    <location>
        <begin position="560"/>
        <end position="561"/>
    </location>
</feature>
<feature type="sequence conflict" description="In Ref. 4; AAL39189." evidence="16" ref="4">
    <original>E</original>
    <variation>Y</variation>
    <location>
        <position position="610"/>
    </location>
</feature>
<feature type="sequence conflict" description="In Ref. 5; L13070." evidence="16" ref="5">
    <original>D</original>
    <variation>AI</variation>
    <location>
        <position position="697"/>
    </location>
</feature>
<gene>
    <name type="primary">Myo61F</name>
    <name evidence="12 13" type="synonym">Myo1C</name>
    <name type="ORF">CG9155</name>
</gene>
<dbReference type="EMBL" id="U07596">
    <property type="protein sequence ID" value="AAA19591.1"/>
    <property type="molecule type" value="mRNA"/>
</dbReference>
<dbReference type="EMBL" id="AE014296">
    <property type="protein sequence ID" value="AAF47477.3"/>
    <property type="molecule type" value="Genomic_DNA"/>
</dbReference>
<dbReference type="EMBL" id="AE014296">
    <property type="protein sequence ID" value="AAF47478.3"/>
    <property type="molecule type" value="Genomic_DNA"/>
</dbReference>
<dbReference type="EMBL" id="AE014296">
    <property type="protein sequence ID" value="AAN11472.1"/>
    <property type="molecule type" value="Genomic_DNA"/>
</dbReference>
<dbReference type="EMBL" id="AE014296">
    <property type="protein sequence ID" value="AAN11473.1"/>
    <property type="molecule type" value="Genomic_DNA"/>
</dbReference>
<dbReference type="EMBL" id="AY069044">
    <property type="protein sequence ID" value="AAL39189.1"/>
    <property type="molecule type" value="mRNA"/>
</dbReference>
<dbReference type="EMBL" id="L13070">
    <property type="status" value="NOT_ANNOTATED_CDS"/>
    <property type="molecule type" value="mRNA"/>
</dbReference>
<dbReference type="EMBL" id="AJ000879">
    <property type="protein sequence ID" value="CAA04367.1"/>
    <property type="molecule type" value="Genomic_DNA"/>
</dbReference>
<dbReference type="PIR" id="S45574">
    <property type="entry name" value="S45574"/>
</dbReference>
<dbReference type="RefSeq" id="NP_476934.2">
    <molecule id="Q23979-3"/>
    <property type="nucleotide sequence ID" value="NM_057586.4"/>
</dbReference>
<dbReference type="RefSeq" id="NP_728594.2">
    <molecule id="Q23979-1"/>
    <property type="nucleotide sequence ID" value="NM_167870.2"/>
</dbReference>
<dbReference type="RefSeq" id="NP_728595.1">
    <molecule id="Q23979-2"/>
    <property type="nucleotide sequence ID" value="NM_167871.2"/>
</dbReference>
<dbReference type="RefSeq" id="NP_728596.1">
    <molecule id="Q23979-2"/>
    <property type="nucleotide sequence ID" value="NM_167872.2"/>
</dbReference>
<dbReference type="SMR" id="Q23979"/>
<dbReference type="BioGRID" id="63696">
    <property type="interactions" value="13"/>
</dbReference>
<dbReference type="FunCoup" id="Q23979">
    <property type="interactions" value="781"/>
</dbReference>
<dbReference type="IntAct" id="Q23979">
    <property type="interactions" value="49"/>
</dbReference>
<dbReference type="STRING" id="7227.FBpp0072567"/>
<dbReference type="iPTMnet" id="Q23979"/>
<dbReference type="PaxDb" id="7227-FBpp0072567"/>
<dbReference type="DNASU" id="38153"/>
<dbReference type="EnsemblMetazoa" id="FBtr0072672">
    <molecule id="Q23979-2"/>
    <property type="protein sequence ID" value="FBpp0072565"/>
    <property type="gene ID" value="FBgn0010246"/>
</dbReference>
<dbReference type="EnsemblMetazoa" id="FBtr0072673">
    <molecule id="Q23979-2"/>
    <property type="protein sequence ID" value="FBpp0072566"/>
    <property type="gene ID" value="FBgn0010246"/>
</dbReference>
<dbReference type="EnsemblMetazoa" id="FBtr0072674">
    <molecule id="Q23979-3"/>
    <property type="protein sequence ID" value="FBpp0072567"/>
    <property type="gene ID" value="FBgn0010246"/>
</dbReference>
<dbReference type="EnsemblMetazoa" id="FBtr0072675">
    <molecule id="Q23979-1"/>
    <property type="protein sequence ID" value="FBpp0072568"/>
    <property type="gene ID" value="FBgn0010246"/>
</dbReference>
<dbReference type="GeneID" id="38153"/>
<dbReference type="KEGG" id="dme:Dmel_CG9155"/>
<dbReference type="UCSC" id="CG9155-RC">
    <property type="organism name" value="d. melanogaster"/>
</dbReference>
<dbReference type="UCSC" id="CG9155-RD">
    <property type="organism name" value="d. melanogaster"/>
</dbReference>
<dbReference type="AGR" id="FB:FBgn0010246"/>
<dbReference type="CTD" id="38153"/>
<dbReference type="FlyBase" id="FBgn0010246">
    <property type="gene designation" value="Myo61F"/>
</dbReference>
<dbReference type="VEuPathDB" id="VectorBase:FBgn0010246"/>
<dbReference type="eggNOG" id="KOG0164">
    <property type="taxonomic scope" value="Eukaryota"/>
</dbReference>
<dbReference type="GeneTree" id="ENSGT00940000170976"/>
<dbReference type="InParanoid" id="Q23979"/>
<dbReference type="OMA" id="KYQTFCT"/>
<dbReference type="OrthoDB" id="6108017at2759"/>
<dbReference type="PhylomeDB" id="Q23979"/>
<dbReference type="SignaLink" id="Q23979"/>
<dbReference type="BioGRID-ORCS" id="38153">
    <property type="hits" value="0 hits in 3 CRISPR screens"/>
</dbReference>
<dbReference type="GenomeRNAi" id="38153"/>
<dbReference type="PRO" id="PR:Q23979"/>
<dbReference type="Proteomes" id="UP000000803">
    <property type="component" value="Chromosome 3L"/>
</dbReference>
<dbReference type="Bgee" id="FBgn0010246">
    <property type="expression patterns" value="Expressed in enterocyte of posterior adult midgut epithelium (Drosophila) in digestive tract and 78 other cell types or tissues"/>
</dbReference>
<dbReference type="ExpressionAtlas" id="Q23979">
    <property type="expression patterns" value="baseline and differential"/>
</dbReference>
<dbReference type="GO" id="GO:0015629">
    <property type="term" value="C:actin cytoskeleton"/>
    <property type="evidence" value="ECO:0000318"/>
    <property type="project" value="GO_Central"/>
</dbReference>
<dbReference type="GO" id="GO:0005903">
    <property type="term" value="C:brush border"/>
    <property type="evidence" value="ECO:0000314"/>
    <property type="project" value="FlyBase"/>
</dbReference>
<dbReference type="GO" id="GO:0005938">
    <property type="term" value="C:cell cortex"/>
    <property type="evidence" value="ECO:0000314"/>
    <property type="project" value="FlyBase"/>
</dbReference>
<dbReference type="GO" id="GO:0005737">
    <property type="term" value="C:cytoplasm"/>
    <property type="evidence" value="ECO:0000318"/>
    <property type="project" value="GO_Central"/>
</dbReference>
<dbReference type="GO" id="GO:0005902">
    <property type="term" value="C:microvillus"/>
    <property type="evidence" value="ECO:0000318"/>
    <property type="project" value="GO_Central"/>
</dbReference>
<dbReference type="GO" id="GO:0016459">
    <property type="term" value="C:myosin complex"/>
    <property type="evidence" value="ECO:0007669"/>
    <property type="project" value="UniProtKB-KW"/>
</dbReference>
<dbReference type="GO" id="GO:0005886">
    <property type="term" value="C:plasma membrane"/>
    <property type="evidence" value="ECO:0000318"/>
    <property type="project" value="GO_Central"/>
</dbReference>
<dbReference type="GO" id="GO:0051015">
    <property type="term" value="F:actin filament binding"/>
    <property type="evidence" value="ECO:0000318"/>
    <property type="project" value="GO_Central"/>
</dbReference>
<dbReference type="GO" id="GO:0005524">
    <property type="term" value="F:ATP binding"/>
    <property type="evidence" value="ECO:0007669"/>
    <property type="project" value="UniProtKB-KW"/>
</dbReference>
<dbReference type="GO" id="GO:0005516">
    <property type="term" value="F:calmodulin binding"/>
    <property type="evidence" value="ECO:0007669"/>
    <property type="project" value="UniProtKB-KW"/>
</dbReference>
<dbReference type="GO" id="GO:0000146">
    <property type="term" value="F:microfilament motor activity"/>
    <property type="evidence" value="ECO:0000318"/>
    <property type="project" value="GO_Central"/>
</dbReference>
<dbReference type="GO" id="GO:0005546">
    <property type="term" value="F:phosphatidylinositol-4,5-bisphosphate binding"/>
    <property type="evidence" value="ECO:0000314"/>
    <property type="project" value="UniProtKB"/>
</dbReference>
<dbReference type="GO" id="GO:0007015">
    <property type="term" value="P:actin filament organization"/>
    <property type="evidence" value="ECO:0000318"/>
    <property type="project" value="GO_Central"/>
</dbReference>
<dbReference type="GO" id="GO:0030048">
    <property type="term" value="P:actin filament-based movement"/>
    <property type="evidence" value="ECO:0000318"/>
    <property type="project" value="GO_Central"/>
</dbReference>
<dbReference type="GO" id="GO:0042742">
    <property type="term" value="P:defense response to bacterium"/>
    <property type="evidence" value="ECO:0000315"/>
    <property type="project" value="FlyBase"/>
</dbReference>
<dbReference type="GO" id="GO:0007368">
    <property type="term" value="P:determination of left/right symmetry"/>
    <property type="evidence" value="ECO:0000315"/>
    <property type="project" value="FlyBase"/>
</dbReference>
<dbReference type="GO" id="GO:0006897">
    <property type="term" value="P:endocytosis"/>
    <property type="evidence" value="ECO:0000318"/>
    <property type="project" value="GO_Central"/>
</dbReference>
<dbReference type="GO" id="GO:0048803">
    <property type="term" value="P:imaginal disc-derived male genitalia morphogenesis"/>
    <property type="evidence" value="ECO:0000315"/>
    <property type="project" value="FlyBase"/>
</dbReference>
<dbReference type="GO" id="GO:0007498">
    <property type="term" value="P:mesoderm development"/>
    <property type="evidence" value="ECO:0000270"/>
    <property type="project" value="FlyBase"/>
</dbReference>
<dbReference type="GO" id="GO:0032528">
    <property type="term" value="P:microvillus organization"/>
    <property type="evidence" value="ECO:0000315"/>
    <property type="project" value="FlyBase"/>
</dbReference>
<dbReference type="CDD" id="cd01378">
    <property type="entry name" value="MYSc_Myo1"/>
    <property type="match status" value="1"/>
</dbReference>
<dbReference type="FunFam" id="1.10.10.820:FF:000001">
    <property type="entry name" value="Myosin heavy chain"/>
    <property type="match status" value="1"/>
</dbReference>
<dbReference type="FunFam" id="3.40.850.10:FF:000101">
    <property type="entry name" value="Slow myosin heavy chain 2"/>
    <property type="match status" value="1"/>
</dbReference>
<dbReference type="FunFam" id="1.20.58.530:FF:000004">
    <property type="entry name" value="Unconventional myosin ID"/>
    <property type="match status" value="1"/>
</dbReference>
<dbReference type="Gene3D" id="1.10.10.820">
    <property type="match status" value="1"/>
</dbReference>
<dbReference type="Gene3D" id="1.20.5.4820">
    <property type="match status" value="1"/>
</dbReference>
<dbReference type="Gene3D" id="1.20.58.530">
    <property type="match status" value="1"/>
</dbReference>
<dbReference type="Gene3D" id="3.40.850.10">
    <property type="entry name" value="Kinesin motor domain"/>
    <property type="match status" value="1"/>
</dbReference>
<dbReference type="Gene3D" id="1.20.120.720">
    <property type="entry name" value="Myosin VI head, motor domain, U50 subdomain"/>
    <property type="match status" value="1"/>
</dbReference>
<dbReference type="InterPro" id="IPR000048">
    <property type="entry name" value="IQ_motif_EF-hand-BS"/>
</dbReference>
<dbReference type="InterPro" id="IPR036961">
    <property type="entry name" value="Kinesin_motor_dom_sf"/>
</dbReference>
<dbReference type="InterPro" id="IPR001609">
    <property type="entry name" value="Myosin_head_motor_dom-like"/>
</dbReference>
<dbReference type="InterPro" id="IPR010926">
    <property type="entry name" value="Myosin_TH1"/>
</dbReference>
<dbReference type="InterPro" id="IPR036072">
    <property type="entry name" value="MYSc_Myo1"/>
</dbReference>
<dbReference type="InterPro" id="IPR027417">
    <property type="entry name" value="P-loop_NTPase"/>
</dbReference>
<dbReference type="PANTHER" id="PTHR13140">
    <property type="entry name" value="MYOSIN"/>
    <property type="match status" value="1"/>
</dbReference>
<dbReference type="PANTHER" id="PTHR13140:SF679">
    <property type="entry name" value="UNCONVENTIONAL MYOSIN IC"/>
    <property type="match status" value="1"/>
</dbReference>
<dbReference type="Pfam" id="PF00612">
    <property type="entry name" value="IQ"/>
    <property type="match status" value="1"/>
</dbReference>
<dbReference type="Pfam" id="PF00063">
    <property type="entry name" value="Myosin_head"/>
    <property type="match status" value="1"/>
</dbReference>
<dbReference type="Pfam" id="PF06017">
    <property type="entry name" value="Myosin_TH1"/>
    <property type="match status" value="1"/>
</dbReference>
<dbReference type="PRINTS" id="PR00193">
    <property type="entry name" value="MYOSINHEAVY"/>
</dbReference>
<dbReference type="SMART" id="SM00015">
    <property type="entry name" value="IQ"/>
    <property type="match status" value="3"/>
</dbReference>
<dbReference type="SMART" id="SM00242">
    <property type="entry name" value="MYSc"/>
    <property type="match status" value="1"/>
</dbReference>
<dbReference type="SUPFAM" id="SSF52540">
    <property type="entry name" value="P-loop containing nucleoside triphosphate hydrolases"/>
    <property type="match status" value="1"/>
</dbReference>
<dbReference type="PROSITE" id="PS50096">
    <property type="entry name" value="IQ"/>
    <property type="match status" value="1"/>
</dbReference>
<dbReference type="PROSITE" id="PS51456">
    <property type="entry name" value="MYOSIN_MOTOR"/>
    <property type="match status" value="1"/>
</dbReference>
<dbReference type="PROSITE" id="PS51757">
    <property type="entry name" value="TH1"/>
    <property type="match status" value="1"/>
</dbReference>
<proteinExistence type="evidence at protein level"/>
<evidence type="ECO:0000255" key="1">
    <source>
        <dbReference type="PROSITE-ProRule" id="PRU00116"/>
    </source>
</evidence>
<evidence type="ECO:0000255" key="2">
    <source>
        <dbReference type="PROSITE-ProRule" id="PRU00782"/>
    </source>
</evidence>
<evidence type="ECO:0000255" key="3">
    <source>
        <dbReference type="PROSITE-ProRule" id="PRU01093"/>
    </source>
</evidence>
<evidence type="ECO:0000269" key="4">
    <source>
    </source>
</evidence>
<evidence type="ECO:0000269" key="5">
    <source>
    </source>
</evidence>
<evidence type="ECO:0000269" key="6">
    <source>
    </source>
</evidence>
<evidence type="ECO:0000269" key="7">
    <source>
    </source>
</evidence>
<evidence type="ECO:0000269" key="8">
    <source>
    </source>
</evidence>
<evidence type="ECO:0000269" key="9">
    <source>
    </source>
</evidence>
<evidence type="ECO:0000269" key="10">
    <source>
    </source>
</evidence>
<evidence type="ECO:0000269" key="11">
    <source>
    </source>
</evidence>
<evidence type="ECO:0000303" key="12">
    <source>
    </source>
</evidence>
<evidence type="ECO:0000303" key="13">
    <source>
    </source>
</evidence>
<evidence type="ECO:0000303" key="14">
    <source>
    </source>
</evidence>
<evidence type="ECO:0000303" key="15">
    <source>
    </source>
</evidence>
<evidence type="ECO:0000305" key="16"/>
<organism>
    <name type="scientific">Drosophila melanogaster</name>
    <name type="common">Fruit fly</name>
    <dbReference type="NCBI Taxonomy" id="7227"/>
    <lineage>
        <taxon>Eukaryota</taxon>
        <taxon>Metazoa</taxon>
        <taxon>Ecdysozoa</taxon>
        <taxon>Arthropoda</taxon>
        <taxon>Hexapoda</taxon>
        <taxon>Insecta</taxon>
        <taxon>Pterygota</taxon>
        <taxon>Neoptera</taxon>
        <taxon>Endopterygota</taxon>
        <taxon>Diptera</taxon>
        <taxon>Brachycera</taxon>
        <taxon>Muscomorpha</taxon>
        <taxon>Ephydroidea</taxon>
        <taxon>Drosophilidae</taxon>
        <taxon>Drosophila</taxon>
        <taxon>Sophophora</taxon>
    </lineage>
</organism>
<keyword id="KW-0009">Actin-binding</keyword>
<keyword id="KW-0025">Alternative splicing</keyword>
<keyword id="KW-0067">ATP-binding</keyword>
<keyword id="KW-0112">Calmodulin-binding</keyword>
<keyword id="KW-1003">Cell membrane</keyword>
<keyword id="KW-0963">Cytoplasm</keyword>
<keyword id="KW-0446">Lipid-binding</keyword>
<keyword id="KW-0472">Membrane</keyword>
<keyword id="KW-0505">Motor protein</keyword>
<keyword id="KW-0518">Myosin</keyword>
<keyword id="KW-0547">Nucleotide-binding</keyword>
<keyword id="KW-0597">Phosphoprotein</keyword>
<keyword id="KW-1185">Reference proteome</keyword>
<keyword id="KW-0677">Repeat</keyword>
<accession>Q23979</accession>
<accession>A4V191</accession>
<accession>Q7KVC1</accession>
<accession>Q8T0U8</accession>
<accession>Q9W0H0</accession>
<protein>
    <recommendedName>
        <fullName evidence="12">Unconventional myosin IC</fullName>
        <shortName evidence="12">MyoIC</shortName>
    </recommendedName>
    <alternativeName>
        <fullName>Brush border myosin IB</fullName>
        <shortName>BBMIB</shortName>
    </alternativeName>
    <alternativeName>
        <fullName evidence="14 15">Myosin-IB</fullName>
        <shortName evidence="14">MIB</shortName>
    </alternativeName>
    <alternativeName>
        <fullName evidence="12 13">Unconventional myosin 1C</fullName>
        <shortName evidence="12 13">Myo1C</shortName>
    </alternativeName>
</protein>
<sequence>MASFNSQLKMETGLHERDRAGVQDFVLLENYQSEEAFIGNLKKRFQEDLIYTYIGQVLISVNPYKQLPIYTDDHVKAYRNKHFYEMPPHIFAVTDNAFRSLIEENRGQCVLISGESGSGKTEASKKVLQFIAACSGNQTTVEGVKDKLLKSNPVLEAFGNAKTNRNDNSSRFGKYMDIQFDFKGAPIGGNILNYLLEKSRVVAQMGGERNFHIFYQLLAGADEALLQELRLERALDTYSYLTDGLNGTVTRINDADSFKQVQQALTVIDFTKEEQREIFGIVASILHLGNVGFTEVEGNAKVNSRDLVVTAARLLGVNASELEAALTHRTIDARGDVVTSPLNQELAIYARDALAKAVYDRLFSWLVQRLNISLQAKETRASRNNVMGILDIYGFEIFQKNSFEQFCINFCNEKLQQLFIELTLKSEQDEYRREGIEWIPVEYFDNKVICNLIEEKHKGIISILDEECLRPGEPTDKTFLEKLTQKLAQHHHYVCHEKAPAHIKKIMLRDEFRLVHYAGEVTYSVNGFLDKNNDLLFRDLKETLSKAGNGIVRNCFPEKELRSLKRPETAITQFRASLNNLMDILMCKEPSYIRCIKPNDLQTANVFNDELVLHQVKYLGLMENLRVRRAGFAYRRTYELFLERYKSLSKSTWPNYKGPGGPKAGVQQLVKDLGWDEEKYRVGETKLFIRWPRTLFDTEDAYQEKKHEIAAIIQAHWKGLMQRRKYLKLRAQVIIMQSYCRRKLAQQAAKKRREAADKIRAFIKGFITRNDAPNGFNEEFIANAKRMWLLRLAKELPTKVLDKSWPHAPGHCEEASGILHRLHRLHLARIYRLKLTPQQKRQFELKVLAEKVFKGKKNNYASSVSTWFQEDRIPKEHIQRVNDFVASTFGSEQLKYQSFCTKFDRHGYKSRDRFILLSNKAIYVLDGKTYKQKHRLPLDKIDFTLTNHNDDLMVIRIPLDLKKDKGDLILIIPRIIEFSTYIIDTVGTASIVSIVDRNSLEHNVVKGKGGVIDIQTGAEPGVVRDKGHLVIIGTQ</sequence>
<name>MY61F_DROME</name>
<reference key="1">
    <citation type="journal article" date="1994" name="J. Mol. Biol.">
        <title>The molecular cloning and characterization of Drosophila melanogaster myosin-IA and myosin-IB.</title>
        <authorList>
            <person name="Morgan N.S."/>
            <person name="Skovronsky D.M."/>
            <person name="Artavanis-Tsakonas S."/>
            <person name="Mooseker M.S."/>
        </authorList>
    </citation>
    <scope>NUCLEOTIDE SEQUENCE [MRNA] (ISOFORM B)</scope>
    <scope>DEVELOPMENTAL STAGE</scope>
    <source>
        <tissue>Head</tissue>
    </source>
</reference>
<reference key="2">
    <citation type="journal article" date="2000" name="Science">
        <title>The genome sequence of Drosophila melanogaster.</title>
        <authorList>
            <person name="Adams M.D."/>
            <person name="Celniker S.E."/>
            <person name="Holt R.A."/>
            <person name="Evans C.A."/>
            <person name="Gocayne J.D."/>
            <person name="Amanatides P.G."/>
            <person name="Scherer S.E."/>
            <person name="Li P.W."/>
            <person name="Hoskins R.A."/>
            <person name="Galle R.F."/>
            <person name="George R.A."/>
            <person name="Lewis S.E."/>
            <person name="Richards S."/>
            <person name="Ashburner M."/>
            <person name="Henderson S.N."/>
            <person name="Sutton G.G."/>
            <person name="Wortman J.R."/>
            <person name="Yandell M.D."/>
            <person name="Zhang Q."/>
            <person name="Chen L.X."/>
            <person name="Brandon R.C."/>
            <person name="Rogers Y.-H.C."/>
            <person name="Blazej R.G."/>
            <person name="Champe M."/>
            <person name="Pfeiffer B.D."/>
            <person name="Wan K.H."/>
            <person name="Doyle C."/>
            <person name="Baxter E.G."/>
            <person name="Helt G."/>
            <person name="Nelson C.R."/>
            <person name="Miklos G.L.G."/>
            <person name="Abril J.F."/>
            <person name="Agbayani A."/>
            <person name="An H.-J."/>
            <person name="Andrews-Pfannkoch C."/>
            <person name="Baldwin D."/>
            <person name="Ballew R.M."/>
            <person name="Basu A."/>
            <person name="Baxendale J."/>
            <person name="Bayraktaroglu L."/>
            <person name="Beasley E.M."/>
            <person name="Beeson K.Y."/>
            <person name="Benos P.V."/>
            <person name="Berman B.P."/>
            <person name="Bhandari D."/>
            <person name="Bolshakov S."/>
            <person name="Borkova D."/>
            <person name="Botchan M.R."/>
            <person name="Bouck J."/>
            <person name="Brokstein P."/>
            <person name="Brottier P."/>
            <person name="Burtis K.C."/>
            <person name="Busam D.A."/>
            <person name="Butler H."/>
            <person name="Cadieu E."/>
            <person name="Center A."/>
            <person name="Chandra I."/>
            <person name="Cherry J.M."/>
            <person name="Cawley S."/>
            <person name="Dahlke C."/>
            <person name="Davenport L.B."/>
            <person name="Davies P."/>
            <person name="de Pablos B."/>
            <person name="Delcher A."/>
            <person name="Deng Z."/>
            <person name="Mays A.D."/>
            <person name="Dew I."/>
            <person name="Dietz S.M."/>
            <person name="Dodson K."/>
            <person name="Doup L.E."/>
            <person name="Downes M."/>
            <person name="Dugan-Rocha S."/>
            <person name="Dunkov B.C."/>
            <person name="Dunn P."/>
            <person name="Durbin K.J."/>
            <person name="Evangelista C.C."/>
            <person name="Ferraz C."/>
            <person name="Ferriera S."/>
            <person name="Fleischmann W."/>
            <person name="Fosler C."/>
            <person name="Gabrielian A.E."/>
            <person name="Garg N.S."/>
            <person name="Gelbart W.M."/>
            <person name="Glasser K."/>
            <person name="Glodek A."/>
            <person name="Gong F."/>
            <person name="Gorrell J.H."/>
            <person name="Gu Z."/>
            <person name="Guan P."/>
            <person name="Harris M."/>
            <person name="Harris N.L."/>
            <person name="Harvey D.A."/>
            <person name="Heiman T.J."/>
            <person name="Hernandez J.R."/>
            <person name="Houck J."/>
            <person name="Hostin D."/>
            <person name="Houston K.A."/>
            <person name="Howland T.J."/>
            <person name="Wei M.-H."/>
            <person name="Ibegwam C."/>
            <person name="Jalali M."/>
            <person name="Kalush F."/>
            <person name="Karpen G.H."/>
            <person name="Ke Z."/>
            <person name="Kennison J.A."/>
            <person name="Ketchum K.A."/>
            <person name="Kimmel B.E."/>
            <person name="Kodira C.D."/>
            <person name="Kraft C.L."/>
            <person name="Kravitz S."/>
            <person name="Kulp D."/>
            <person name="Lai Z."/>
            <person name="Lasko P."/>
            <person name="Lei Y."/>
            <person name="Levitsky A.A."/>
            <person name="Li J.H."/>
            <person name="Li Z."/>
            <person name="Liang Y."/>
            <person name="Lin X."/>
            <person name="Liu X."/>
            <person name="Mattei B."/>
            <person name="McIntosh T.C."/>
            <person name="McLeod M.P."/>
            <person name="McPherson D."/>
            <person name="Merkulov G."/>
            <person name="Milshina N.V."/>
            <person name="Mobarry C."/>
            <person name="Morris J."/>
            <person name="Moshrefi A."/>
            <person name="Mount S.M."/>
            <person name="Moy M."/>
            <person name="Murphy B."/>
            <person name="Murphy L."/>
            <person name="Muzny D.M."/>
            <person name="Nelson D.L."/>
            <person name="Nelson D.R."/>
            <person name="Nelson K.A."/>
            <person name="Nixon K."/>
            <person name="Nusskern D.R."/>
            <person name="Pacleb J.M."/>
            <person name="Palazzolo M."/>
            <person name="Pittman G.S."/>
            <person name="Pan S."/>
            <person name="Pollard J."/>
            <person name="Puri V."/>
            <person name="Reese M.G."/>
            <person name="Reinert K."/>
            <person name="Remington K."/>
            <person name="Saunders R.D.C."/>
            <person name="Scheeler F."/>
            <person name="Shen H."/>
            <person name="Shue B.C."/>
            <person name="Siden-Kiamos I."/>
            <person name="Simpson M."/>
            <person name="Skupski M.P."/>
            <person name="Smith T.J."/>
            <person name="Spier E."/>
            <person name="Spradling A.C."/>
            <person name="Stapleton M."/>
            <person name="Strong R."/>
            <person name="Sun E."/>
            <person name="Svirskas R."/>
            <person name="Tector C."/>
            <person name="Turner R."/>
            <person name="Venter E."/>
            <person name="Wang A.H."/>
            <person name="Wang X."/>
            <person name="Wang Z.-Y."/>
            <person name="Wassarman D.A."/>
            <person name="Weinstock G.M."/>
            <person name="Weissenbach J."/>
            <person name="Williams S.M."/>
            <person name="Woodage T."/>
            <person name="Worley K.C."/>
            <person name="Wu D."/>
            <person name="Yang S."/>
            <person name="Yao Q.A."/>
            <person name="Ye J."/>
            <person name="Yeh R.-F."/>
            <person name="Zaveri J.S."/>
            <person name="Zhan M."/>
            <person name="Zhang G."/>
            <person name="Zhao Q."/>
            <person name="Zheng L."/>
            <person name="Zheng X.H."/>
            <person name="Zhong F.N."/>
            <person name="Zhong W."/>
            <person name="Zhou X."/>
            <person name="Zhu S.C."/>
            <person name="Zhu X."/>
            <person name="Smith H.O."/>
            <person name="Gibbs R.A."/>
            <person name="Myers E.W."/>
            <person name="Rubin G.M."/>
            <person name="Venter J.C."/>
        </authorList>
    </citation>
    <scope>NUCLEOTIDE SEQUENCE [LARGE SCALE GENOMIC DNA]</scope>
    <source>
        <strain>Berkeley</strain>
    </source>
</reference>
<reference key="3">
    <citation type="journal article" date="2002" name="Genome Biol.">
        <title>Annotation of the Drosophila melanogaster euchromatic genome: a systematic review.</title>
        <authorList>
            <person name="Misra S."/>
            <person name="Crosby M.A."/>
            <person name="Mungall C.J."/>
            <person name="Matthews B.B."/>
            <person name="Campbell K.S."/>
            <person name="Hradecky P."/>
            <person name="Huang Y."/>
            <person name="Kaminker J.S."/>
            <person name="Millburn G.H."/>
            <person name="Prochnik S.E."/>
            <person name="Smith C.D."/>
            <person name="Tupy J.L."/>
            <person name="Whitfield E.J."/>
            <person name="Bayraktaroglu L."/>
            <person name="Berman B.P."/>
            <person name="Bettencourt B.R."/>
            <person name="Celniker S.E."/>
            <person name="de Grey A.D.N.J."/>
            <person name="Drysdale R.A."/>
            <person name="Harris N.L."/>
            <person name="Richter J."/>
            <person name="Russo S."/>
            <person name="Schroeder A.J."/>
            <person name="Shu S.Q."/>
            <person name="Stapleton M."/>
            <person name="Yamada C."/>
            <person name="Ashburner M."/>
            <person name="Gelbart W.M."/>
            <person name="Rubin G.M."/>
            <person name="Lewis S.E."/>
        </authorList>
    </citation>
    <scope>GENOME REANNOTATION</scope>
    <scope>ALTERNATIVE SPLICING</scope>
    <source>
        <strain>Berkeley</strain>
    </source>
</reference>
<reference key="4">
    <citation type="journal article" date="2002" name="Genome Biol.">
        <title>A Drosophila full-length cDNA resource.</title>
        <authorList>
            <person name="Stapleton M."/>
            <person name="Carlson J.W."/>
            <person name="Brokstein P."/>
            <person name="Yu C."/>
            <person name="Champe M."/>
            <person name="George R.A."/>
            <person name="Guarin H."/>
            <person name="Kronmiller B."/>
            <person name="Pacleb J.M."/>
            <person name="Park S."/>
            <person name="Wan K.H."/>
            <person name="Rubin G.M."/>
            <person name="Celniker S.E."/>
        </authorList>
    </citation>
    <scope>NUCLEOTIDE SEQUENCE [LARGE SCALE MRNA] (ISOFORM A)</scope>
    <source>
        <strain>Berkeley</strain>
        <tissue>Head</tissue>
    </source>
</reference>
<reference key="5">
    <citation type="journal article" date="1993" name="Biochem. Biophys. Res. Commun.">
        <title>A new myosin I gene in Drosophila.</title>
        <authorList>
            <person name="Cheney C.M."/>
            <person name="Kravit N.G."/>
            <person name="Verbsky J.W."/>
        </authorList>
    </citation>
    <scope>NUCLEOTIDE SEQUENCE [MRNA] OF 347-706</scope>
</reference>
<reference key="6">
    <citation type="submission" date="1997-07" db="EMBL/GenBank/DDBJ databases">
        <authorList>
            <person name="Caggese C."/>
        </authorList>
    </citation>
    <scope>NUCLEOTIDE SEQUENCE [GENOMIC DNA] OF 639-1035</scope>
</reference>
<reference key="7">
    <citation type="journal article" date="1995" name="Dev. Biol.">
        <title>Characterization of myosin-IA and myosin-IB, two unconventional myosins associated with the Drosophila brush border cytoskeleton.</title>
        <authorList>
            <person name="Morgan N.S."/>
            <person name="Heintzelman M.B."/>
            <person name="Mooseker M.S."/>
        </authorList>
    </citation>
    <scope>ACTIN-BINDING</scope>
    <scope>SUBCELLULAR LOCATION</scope>
    <scope>TISSUE SPECIFICITY</scope>
    <scope>DEVELOPMENTAL STAGE</scope>
</reference>
<reference key="8">
    <citation type="journal article" date="2007" name="Mol. Biosyst.">
        <title>An integrated chemical, mass spectrometric and computational strategy for (quantitative) phosphoproteomics: application to Drosophila melanogaster Kc167 cells.</title>
        <authorList>
            <person name="Bodenmiller B."/>
            <person name="Mueller L.N."/>
            <person name="Pedrioli P.G.A."/>
            <person name="Pflieger D."/>
            <person name="Juenger M.A."/>
            <person name="Eng J.K."/>
            <person name="Aebersold R."/>
            <person name="Tao W.A."/>
        </authorList>
    </citation>
    <scope>PHOSPHORYLATION [LARGE SCALE ANALYSIS] AT SER-304 AND THR-310</scope>
    <scope>IDENTIFICATION BY MASS SPECTROMETRY</scope>
</reference>
<reference key="9">
    <citation type="journal article" date="2006" name="Nature">
        <title>An unconventional myosin in Drosophila reverses the default handedness in visceral organs.</title>
        <authorList>
            <person name="Hozumi S."/>
            <person name="Maeda R."/>
            <person name="Taniguchi K."/>
            <person name="Kanai M."/>
            <person name="Shirakabe S."/>
            <person name="Sasamura T."/>
            <person name="Speder P."/>
            <person name="Noselli S."/>
            <person name="Aigaki T."/>
            <person name="Murakami R."/>
            <person name="Matsuno K."/>
        </authorList>
    </citation>
    <scope>FUNCTION</scope>
    <scope>DISRUPTION PHENOTYPE</scope>
</reference>
<reference key="10">
    <citation type="journal article" date="2008" name="Dev. Dyn.">
        <title>Head region of unconventional myosin I family members is responsible for the organ-specificity of their roles in left-right polarity in Drosophila.</title>
        <authorList>
            <person name="Hozumi S."/>
            <person name="Maeda R."/>
            <person name="Taniguchi-Kanai M."/>
            <person name="Okumura T."/>
            <person name="Taniguchi K."/>
            <person name="Kawakatsu Y."/>
            <person name="Nakazawa N."/>
            <person name="Hatori R."/>
            <person name="Matsuno K."/>
        </authorList>
    </citation>
    <scope>FUNCTION</scope>
    <scope>MUTAGENESIS OF 114-GLY--THR-121; LYS-120; ASN-166; PHE-395; 590-PRO--ASP-600; 705-LYS--ASN-774 AND 775-GLY--GLN-1035</scope>
</reference>
<reference key="11">
    <citation type="journal article" date="2012" name="Development">
        <title>DE-Cadherin regulates unconventional Myosin ID and Myosin IC in Drosophila left-right asymmetry establishment.</title>
        <authorList>
            <person name="Petzoldt A.G."/>
            <person name="Coutelis J.B."/>
            <person name="Geminard C."/>
            <person name="Speder P."/>
            <person name="Suzanne M."/>
            <person name="Cerezo D."/>
            <person name="Noselli S."/>
        </authorList>
    </citation>
    <scope>FUNCTION</scope>
    <scope>DISRUPTION PHENOTYPE</scope>
    <scope>SUBCELLULAR LOCATION</scope>
    <scope>DEVELOPMENTAL STAGE</scope>
</reference>
<reference key="12">
    <citation type="journal article" date="2015" name="Genetics">
        <title>Class I myosins have overlapping and specialized functions in left-right asymmetric development in Drosophila.</title>
        <authorList>
            <person name="Okumura T."/>
            <person name="Sasamura T."/>
            <person name="Inatomi M."/>
            <person name="Hozumi S."/>
            <person name="Nakamura M."/>
            <person name="Hatori R."/>
            <person name="Taniguchi K."/>
            <person name="Nakazawa N."/>
            <person name="Suzuki E."/>
            <person name="Maeda R."/>
            <person name="Yamakawa T."/>
            <person name="Matsuno K."/>
        </authorList>
    </citation>
    <scope>FUNCTION</scope>
    <scope>SUBCELLULAR LOCATION</scope>
    <scope>DISRUPTION PHENOTYPE</scope>
    <scope>DEVELOPMENTAL STAGE</scope>
    <scope>TISSUE SPECIFICITY</scope>
</reference>
<reference key="13">
    <citation type="journal article" date="2018" name="Science">
        <title>Molecular to organismal chirality is induced by the conserved myosin 1D.</title>
        <authorList>
            <person name="Lebreton G."/>
            <person name="Geminard C."/>
            <person name="Lapraz F."/>
            <person name="Pyrpassopoulos S."/>
            <person name="Cerezo D."/>
            <person name="Speder P."/>
            <person name="Ostap E.M."/>
            <person name="Noselli S."/>
        </authorList>
    </citation>
    <scope>FUNCTION</scope>
    <scope>LIPID-BINDING</scope>
    <scope>SUBCELLULAR LOCATION</scope>
    <scope>ACTIN-BINDING</scope>
    <scope>DOMAIN</scope>
</reference>
<comment type="function">
    <text evidence="4 6 7 8 9">Unconventional myosin that functions as actin-based motor protein with ATPase activity (PubMed:30467170). Binds to membranes enriched in phosphatidylinositol 4-5-bisphosphate, and can glide along actin filaments when anchored to a lipid bilayer (PubMed:30467170). Functions as antagonist for Myo31DF, an unconventional myosin with an essential role in the establishment of body left-right asymmetry (PubMed:16598258, PubMed:18521948, PubMed:22491943, PubMed:25659376, PubMed:30467170).</text>
</comment>
<comment type="subunit">
    <text evidence="9 10">Binds F-actin.</text>
</comment>
<comment type="subcellular location">
    <subcellularLocation>
        <location evidence="7 8 10">Cytoplasm</location>
    </subcellularLocation>
    <subcellularLocation>
        <location evidence="7 8 10">Cytoplasm</location>
        <location evidence="7 8 10">Cell cortex</location>
    </subcellularLocation>
    <subcellularLocation>
        <location evidence="7">Cell membrane</location>
        <topology evidence="7">Peripheral membrane protein</topology>
        <orientation evidence="7">Cytoplasmic side</orientation>
    </subcellularLocation>
    <text evidence="7 8 10">Protein shifts from the basolateral to apical domain in enterocytes and follicle cells (PubMed:7589814). Colocalizes with the actin cytoskeleton (PubMed:22491943, PubMed:25659376).</text>
</comment>
<comment type="alternative products">
    <event type="alternative splicing"/>
    <isoform>
        <id>Q23979-1</id>
        <name>A</name>
        <sequence type="displayed"/>
    </isoform>
    <isoform>
        <id>Q23979-2</id>
        <name>B</name>
        <name>C</name>
        <sequence type="described" ref="VSP_009274"/>
    </isoform>
    <isoform>
        <id>Q23979-3</id>
        <name>D</name>
        <sequence type="described" ref="VSP_035432"/>
    </isoform>
</comment>
<comment type="tissue specificity">
    <text evidence="8 10">In the embryo, expressed in gastric caeca, midgut cells of the proventriculus, and in the mid and hindgut. In the larval and adult gut brush border, expressed in the microvilli. Also expressed at high levels in follicle cells during oogenesis.</text>
</comment>
<comment type="developmental stage">
    <text evidence="7 8 10 11">Expression starts at 8-12 hours embryonic development, continues to increase until third larval instar, disappears in pupae and is present at a low level in adults. Expression in embryogenesis is correlated with the formation of a brush border within the alimentary canal. In third instar larvae, detected in segment A8 of the male genital disk (PubMed:22491943). First detected at stage 12 in the embryonic anterior and posterior midgut, and in the stomatogastric nervous system. Detected in trachea at stage 14. Widely expressed in stage 16 in embryos (PubMed:25659376).</text>
</comment>
<comment type="domain">
    <text evidence="9">The myosin motor domain contains the derminants for the direction of left-right body asymmetry.</text>
</comment>
<comment type="disruption phenotype">
    <text evidence="4 7 8">Viable and fertile, but adults have a shortened lifespan. Flies deficient in both Myo31DF and Myo61F are viable and fertile, but adults have a shorter lifespan than single mutants. Flies deficient in Myo61F show normal left-right asymmetry of the embryonic gut and normal, dextral rotation of male genitalia, and the same is observed in mutants deficient in both Myo61F and Myo95E. Mutants deficient in Myo31DF and Myo61F display stronger sinistral rotation of the male genitalia than mutants deficient for Myo31DF (PubMed:25659376). RNAi-mediated knockdown causes defects in embryonic midgut laterality, but only with low-frequency (PubMed:16598258). RNAi-mediated knockdown has no effect on normal, dextral rotation of male genitalia (PubMed:22491943). Combined RNAi-mediated knockdown of Myo31DF and Myo61F gives rise to the same phenotype as knockdown of Myo31DF alone, i.e sinistral rotation of the male genitalia (PubMed:22491943).</text>
</comment>
<comment type="miscellaneous">
    <text evidence="4 6 7 9">Overexpression in larval epidermis causes sinistral twisting of the whole larval body. Ectopic expression in tracheal precursor cells causes sinistral spiraling of tracheal branches, giving rise to a spiraling ribbon shape instead of the normal smooth tube. Ectopic expression in epithelial cells causes increased elongation and a clear shift of the membrane orientation toward one side, so that the membrane is no longer perpendicular to the anterior-posterior axis (PubMed:30467170). Overexpression causes reversal of the normal left-right laterality of the embryonic midgut and hindgut (PubMed:16598258, PubMed:18521948). Overexpression causes loss of the normal dextral rotation of the male genitalia, and leads to sinistral rotation in some cases (PubMed:22491943).</text>
</comment>
<comment type="similarity">
    <text evidence="16">Belongs to the TRAFAC class myosin-kinesin ATPase superfamily. Myosin family.</text>
</comment>